<proteinExistence type="inferred from homology"/>
<gene>
    <name type="ordered locus">BUAPTUC7_482</name>
</gene>
<protein>
    <recommendedName>
        <fullName evidence="1">UPF0250 protein BUAPTUC7_482</fullName>
    </recommendedName>
</protein>
<name>Y482_BUCAT</name>
<accession>B8D816</accession>
<evidence type="ECO:0000255" key="1">
    <source>
        <dbReference type="HAMAP-Rule" id="MF_00659"/>
    </source>
</evidence>
<comment type="similarity">
    <text evidence="1">Belongs to the UPF0250 family.</text>
</comment>
<dbReference type="EMBL" id="CP001158">
    <property type="protein sequence ID" value="ACL30281.1"/>
    <property type="molecule type" value="Genomic_DNA"/>
</dbReference>
<dbReference type="SMR" id="B8D816"/>
<dbReference type="KEGG" id="bau:BUAPTUC7_482"/>
<dbReference type="HOGENOM" id="CLU_161438_2_1_6"/>
<dbReference type="GO" id="GO:0005829">
    <property type="term" value="C:cytosol"/>
    <property type="evidence" value="ECO:0007669"/>
    <property type="project" value="TreeGrafter"/>
</dbReference>
<dbReference type="Gene3D" id="3.30.70.260">
    <property type="match status" value="1"/>
</dbReference>
<dbReference type="HAMAP" id="MF_00659">
    <property type="entry name" value="UPF0250"/>
    <property type="match status" value="1"/>
</dbReference>
<dbReference type="InterPro" id="IPR007454">
    <property type="entry name" value="UPF0250_YbeD-like"/>
</dbReference>
<dbReference type="InterPro" id="IPR027471">
    <property type="entry name" value="YbeD-like_sf"/>
</dbReference>
<dbReference type="NCBIfam" id="NF003447">
    <property type="entry name" value="PRK04998.1"/>
    <property type="match status" value="1"/>
</dbReference>
<dbReference type="PANTHER" id="PTHR38036">
    <property type="entry name" value="UPF0250 PROTEIN YBED"/>
    <property type="match status" value="1"/>
</dbReference>
<dbReference type="PANTHER" id="PTHR38036:SF1">
    <property type="entry name" value="UPF0250 PROTEIN YBED"/>
    <property type="match status" value="1"/>
</dbReference>
<dbReference type="Pfam" id="PF04359">
    <property type="entry name" value="DUF493"/>
    <property type="match status" value="1"/>
</dbReference>
<dbReference type="SUPFAM" id="SSF117991">
    <property type="entry name" value="YbeD/HP0495-like"/>
    <property type="match status" value="1"/>
</dbReference>
<feature type="chain" id="PRO_1000200436" description="UPF0250 protein BUAPTUC7_482">
    <location>
        <begin position="1"/>
        <end position="87"/>
    </location>
</feature>
<organism>
    <name type="scientific">Buchnera aphidicola subsp. Acyrthosiphon pisum (strain Tuc7)</name>
    <dbReference type="NCBI Taxonomy" id="561501"/>
    <lineage>
        <taxon>Bacteria</taxon>
        <taxon>Pseudomonadati</taxon>
        <taxon>Pseudomonadota</taxon>
        <taxon>Gammaproteobacteria</taxon>
        <taxon>Enterobacterales</taxon>
        <taxon>Erwiniaceae</taxon>
        <taxon>Buchnera</taxon>
    </lineage>
</organism>
<reference key="1">
    <citation type="journal article" date="2009" name="Science">
        <title>The dynamics and time scale of ongoing genomic erosion in symbiotic bacteria.</title>
        <authorList>
            <person name="Moran N.A."/>
            <person name="McLaughlin H.J."/>
            <person name="Sorek R."/>
        </authorList>
    </citation>
    <scope>NUCLEOTIDE SEQUENCE [LARGE SCALE GENOMIC DNA]</scope>
    <source>
        <strain>Tuc7</strain>
    </source>
</reference>
<sequence>MKTKLREMLRFPCFFTYKIIGLAQPELIDQIIKVIQIQIPGDYTPQVKSSNRGNYLSVSITICAKNFEQIECLYHEISKINIVRMVL</sequence>